<reference key="1">
    <citation type="journal article" date="1967" name="J. Biol. Chem.">
        <title>The amino acid sequence of the A protein (alpha subunit) of the tryptophan synthetase of Escherichia coli.</title>
        <authorList>
            <person name="Guest J.R."/>
            <person name="Drapeau G.R."/>
            <person name="Carlton B.C."/>
            <person name="Yanofsky C."/>
        </authorList>
    </citation>
    <scope>PROTEIN SEQUENCE</scope>
</reference>
<reference key="2">
    <citation type="journal article" date="1979" name="Proc. Natl. Acad. Sci. U.S.A.">
        <title>Nucleotide sequences of trpA of Salmonella typhimurium and Escherichia coli: an evolutionary comparison.</title>
        <authorList>
            <person name="Nichols B.P."/>
            <person name="Yanofsky C."/>
        </authorList>
    </citation>
    <scope>PROTEIN SEQUENCE</scope>
</reference>
<reference key="3">
    <citation type="journal article" date="1981" name="Nucleic Acids Res.">
        <title>The complete nucleotide sequence of the tryptophan operon of Escherichia coli.</title>
        <authorList>
            <person name="Yanofsky C."/>
            <person name="Platt T."/>
            <person name="Crawford I.P."/>
            <person name="Nichols B.P."/>
            <person name="Christie G.E."/>
            <person name="Horowitz H."/>
            <person name="van Cleemput M."/>
            <person name="Wu A.M."/>
        </authorList>
    </citation>
    <scope>NUCLEOTIDE SEQUENCE [GENOMIC DNA]</scope>
</reference>
<reference key="4">
    <citation type="journal article" date="1993" name="Genetics">
        <title>Molecular evolution of the Escherichia coli chromosome. IV. Sequence comparisons.</title>
        <authorList>
            <person name="Milkman R."/>
            <person name="Bridges M.M."/>
        </authorList>
    </citation>
    <scope>NUCLEOTIDE SEQUENCE [GENOMIC DNA]</scope>
</reference>
<reference key="5">
    <citation type="journal article" date="1996" name="DNA Res.">
        <title>A 570-kb DNA sequence of the Escherichia coli K-12 genome corresponding to the 28.0-40.1 min region on the linkage map.</title>
        <authorList>
            <person name="Aiba H."/>
            <person name="Baba T."/>
            <person name="Fujita K."/>
            <person name="Hayashi K."/>
            <person name="Inada T."/>
            <person name="Isono K."/>
            <person name="Itoh T."/>
            <person name="Kasai H."/>
            <person name="Kashimoto K."/>
            <person name="Kimura S."/>
            <person name="Kitakawa M."/>
            <person name="Kitagawa M."/>
            <person name="Makino K."/>
            <person name="Miki T."/>
            <person name="Mizobuchi K."/>
            <person name="Mori H."/>
            <person name="Mori T."/>
            <person name="Motomura K."/>
            <person name="Nakade S."/>
            <person name="Nakamura Y."/>
            <person name="Nashimoto H."/>
            <person name="Nishio Y."/>
            <person name="Oshima T."/>
            <person name="Saito N."/>
            <person name="Sampei G."/>
            <person name="Seki Y."/>
            <person name="Sivasundaram S."/>
            <person name="Tagami H."/>
            <person name="Takeda J."/>
            <person name="Takemoto K."/>
            <person name="Takeuchi Y."/>
            <person name="Wada C."/>
            <person name="Yamamoto Y."/>
            <person name="Horiuchi T."/>
        </authorList>
    </citation>
    <scope>NUCLEOTIDE SEQUENCE [LARGE SCALE GENOMIC DNA]</scope>
    <source>
        <strain>K12 / W3110 / ATCC 27325 / DSM 5911</strain>
    </source>
</reference>
<reference key="6">
    <citation type="journal article" date="1997" name="Science">
        <title>The complete genome sequence of Escherichia coli K-12.</title>
        <authorList>
            <person name="Blattner F.R."/>
            <person name="Plunkett G. III"/>
            <person name="Bloch C.A."/>
            <person name="Perna N.T."/>
            <person name="Burland V."/>
            <person name="Riley M."/>
            <person name="Collado-Vides J."/>
            <person name="Glasner J.D."/>
            <person name="Rode C.K."/>
            <person name="Mayhew G.F."/>
            <person name="Gregor J."/>
            <person name="Davis N.W."/>
            <person name="Kirkpatrick H.A."/>
            <person name="Goeden M.A."/>
            <person name="Rose D.J."/>
            <person name="Mau B."/>
            <person name="Shao Y."/>
        </authorList>
    </citation>
    <scope>NUCLEOTIDE SEQUENCE [LARGE SCALE GENOMIC DNA]</scope>
    <source>
        <strain>K12 / MG1655 / ATCC 47076</strain>
    </source>
</reference>
<reference key="7">
    <citation type="journal article" date="2006" name="Mol. Syst. Biol.">
        <title>Highly accurate genome sequences of Escherichia coli K-12 strains MG1655 and W3110.</title>
        <authorList>
            <person name="Hayashi K."/>
            <person name="Morooka N."/>
            <person name="Yamamoto Y."/>
            <person name="Fujita K."/>
            <person name="Isono K."/>
            <person name="Choi S."/>
            <person name="Ohtsubo E."/>
            <person name="Baba T."/>
            <person name="Wanner B.L."/>
            <person name="Mori H."/>
            <person name="Horiuchi T."/>
        </authorList>
    </citation>
    <scope>NUCLEOTIDE SEQUENCE [LARGE SCALE GENOMIC DNA]</scope>
    <source>
        <strain>K12 / W3110 / ATCC 27325 / DSM 5911</strain>
    </source>
</reference>
<reference key="8">
    <citation type="journal article" date="1997" name="Electrophoresis">
        <title>Comparing the predicted and observed properties of proteins encoded in the genome of Escherichia coli K-12.</title>
        <authorList>
            <person name="Link A.J."/>
            <person name="Robison K."/>
            <person name="Church G.M."/>
        </authorList>
    </citation>
    <scope>PROTEIN SEQUENCE OF 1-12</scope>
    <source>
        <strain>K12 / EMG2</strain>
    </source>
</reference>
<reference key="9">
    <citation type="journal article" date="1989" name="Biochimie">
        <title>Missense and nonsense suppressors can correct frameshift mutations.</title>
        <authorList>
            <person name="Tucker S.D."/>
            <person name="Murgola E.J."/>
            <person name="Pagel F.T."/>
        </authorList>
    </citation>
    <scope>NUCLEOTIDE SEQUENCE [GENOMIC DNA] OF 200-225 (MUTANT TRPA46-ASP-PR3)</scope>
    <source>
        <strain>K12</strain>
    </source>
</reference>
<reference key="10">
    <citation type="journal article" date="1997" name="Electrophoresis">
        <title>Escherichia coli proteome analysis using the gene-protein database.</title>
        <authorList>
            <person name="VanBogelen R.A."/>
            <person name="Abshire K.Z."/>
            <person name="Moldover B."/>
            <person name="Olson E.R."/>
            <person name="Neidhardt F.C."/>
        </authorList>
    </citation>
    <scope>IDENTIFICATION BY 2D-GEL</scope>
</reference>
<organism>
    <name type="scientific">Escherichia coli (strain K12)</name>
    <dbReference type="NCBI Taxonomy" id="83333"/>
    <lineage>
        <taxon>Bacteria</taxon>
        <taxon>Pseudomonadati</taxon>
        <taxon>Pseudomonadota</taxon>
        <taxon>Gammaproteobacteria</taxon>
        <taxon>Enterobacterales</taxon>
        <taxon>Enterobacteriaceae</taxon>
        <taxon>Escherichia</taxon>
    </lineage>
</organism>
<comment type="function">
    <text>The alpha subunit is responsible for the aldol cleavage of indoleglycerol phosphate to indole and glyceraldehyde 3-phosphate.</text>
</comment>
<comment type="catalytic activity">
    <reaction evidence="1">
        <text>(1S,2R)-1-C-(indol-3-yl)glycerol 3-phosphate + L-serine = D-glyceraldehyde 3-phosphate + L-tryptophan + H2O</text>
        <dbReference type="Rhea" id="RHEA:10532"/>
        <dbReference type="ChEBI" id="CHEBI:15377"/>
        <dbReference type="ChEBI" id="CHEBI:33384"/>
        <dbReference type="ChEBI" id="CHEBI:57912"/>
        <dbReference type="ChEBI" id="CHEBI:58866"/>
        <dbReference type="ChEBI" id="CHEBI:59776"/>
        <dbReference type="EC" id="4.2.1.20"/>
    </reaction>
</comment>
<comment type="pathway">
    <text evidence="1">Amino-acid biosynthesis; L-tryptophan biosynthesis; L-tryptophan from chorismate: step 5/5.</text>
</comment>
<comment type="subunit">
    <text>Tetramer of two alpha and two beta chains.</text>
</comment>
<comment type="similarity">
    <text evidence="1">Belongs to the TrpA family.</text>
</comment>
<gene>
    <name evidence="1" type="primary">trpA</name>
    <name type="ordered locus">b1260</name>
    <name type="ordered locus">JW1252</name>
</gene>
<protein>
    <recommendedName>
        <fullName evidence="1">Tryptophan synthase alpha chain</fullName>
        <ecNumber evidence="1">4.2.1.20</ecNumber>
    </recommendedName>
</protein>
<keyword id="KW-0002">3D-structure</keyword>
<keyword id="KW-0028">Amino-acid biosynthesis</keyword>
<keyword id="KW-0057">Aromatic amino acid biosynthesis</keyword>
<keyword id="KW-0903">Direct protein sequencing</keyword>
<keyword id="KW-0456">Lyase</keyword>
<keyword id="KW-1185">Reference proteome</keyword>
<keyword id="KW-0822">Tryptophan biosynthesis</keyword>
<proteinExistence type="evidence at protein level"/>
<name>TRPA_ECOLI</name>
<dbReference type="EC" id="4.2.1.20" evidence="1"/>
<dbReference type="EMBL" id="V00364">
    <property type="protein sequence ID" value="CAA23662.1"/>
    <property type="molecule type" value="Genomic_DNA"/>
</dbReference>
<dbReference type="EMBL" id="V00372">
    <property type="protein sequence ID" value="CAA23675.1"/>
    <property type="molecule type" value="Genomic_DNA"/>
</dbReference>
<dbReference type="EMBL" id="J01714">
    <property type="protein sequence ID" value="AAA57301.1"/>
    <property type="molecule type" value="Genomic_DNA"/>
</dbReference>
<dbReference type="EMBL" id="U23489">
    <property type="protein sequence ID" value="AAB60035.1"/>
    <property type="molecule type" value="Genomic_DNA"/>
</dbReference>
<dbReference type="EMBL" id="U23490">
    <property type="protein sequence ID" value="AAA65140.1"/>
    <property type="molecule type" value="Genomic_DNA"/>
</dbReference>
<dbReference type="EMBL" id="U23491">
    <property type="protein sequence ID" value="AAA65146.1"/>
    <property type="molecule type" value="Genomic_DNA"/>
</dbReference>
<dbReference type="EMBL" id="U23492">
    <property type="protein sequence ID" value="AAA65152.1"/>
    <property type="molecule type" value="Genomic_DNA"/>
</dbReference>
<dbReference type="EMBL" id="U23494">
    <property type="protein sequence ID" value="AAA65164.1"/>
    <property type="molecule type" value="Genomic_DNA"/>
</dbReference>
<dbReference type="EMBL" id="U25417">
    <property type="protein sequence ID" value="AAA73791.1"/>
    <property type="molecule type" value="Genomic_DNA"/>
</dbReference>
<dbReference type="EMBL" id="U25418">
    <property type="protein sequence ID" value="AAA73797.1"/>
    <property type="molecule type" value="Genomic_DNA"/>
</dbReference>
<dbReference type="EMBL" id="U25419">
    <property type="protein sequence ID" value="AAA73803.1"/>
    <property type="molecule type" value="Genomic_DNA"/>
</dbReference>
<dbReference type="EMBL" id="U25420">
    <property type="protein sequence ID" value="AAA73809.1"/>
    <property type="molecule type" value="Genomic_DNA"/>
</dbReference>
<dbReference type="EMBL" id="U25421">
    <property type="protein sequence ID" value="AAA73815.1"/>
    <property type="molecule type" value="Genomic_DNA"/>
</dbReference>
<dbReference type="EMBL" id="U25422">
    <property type="protein sequence ID" value="AAA73821.1"/>
    <property type="molecule type" value="Genomic_DNA"/>
</dbReference>
<dbReference type="EMBL" id="U00096">
    <property type="protein sequence ID" value="AAC74342.1"/>
    <property type="molecule type" value="Genomic_DNA"/>
</dbReference>
<dbReference type="EMBL" id="AP009048">
    <property type="protein sequence ID" value="BAA14792.1"/>
    <property type="molecule type" value="Genomic_DNA"/>
</dbReference>
<dbReference type="EMBL" id="X16698">
    <property type="protein sequence ID" value="CAA34671.1"/>
    <property type="molecule type" value="Genomic_DNA"/>
</dbReference>
<dbReference type="PIR" id="E93746">
    <property type="entry name" value="TSECA"/>
</dbReference>
<dbReference type="RefSeq" id="NP_415776.1">
    <property type="nucleotide sequence ID" value="NC_000913.3"/>
</dbReference>
<dbReference type="RefSeq" id="WP_000443067.1">
    <property type="nucleotide sequence ID" value="NZ_SSZK01000031.1"/>
</dbReference>
<dbReference type="PDB" id="1V7Y">
    <property type="method" value="X-ray"/>
    <property type="resolution" value="2.50 A"/>
    <property type="chains" value="A/B=1-268"/>
</dbReference>
<dbReference type="PDB" id="1WQ5">
    <property type="method" value="X-ray"/>
    <property type="resolution" value="2.30 A"/>
    <property type="chains" value="A/B=1-268"/>
</dbReference>
<dbReference type="PDB" id="1XC4">
    <property type="method" value="X-ray"/>
    <property type="resolution" value="2.80 A"/>
    <property type="chains" value="A/B=1-268"/>
</dbReference>
<dbReference type="PDB" id="1XCF">
    <property type="method" value="X-ray"/>
    <property type="resolution" value="1.80 A"/>
    <property type="chains" value="A/B=1-268"/>
</dbReference>
<dbReference type="PDBsum" id="1V7Y"/>
<dbReference type="PDBsum" id="1WQ5"/>
<dbReference type="PDBsum" id="1XC4"/>
<dbReference type="PDBsum" id="1XCF"/>
<dbReference type="SMR" id="P0A877"/>
<dbReference type="BioGRID" id="4260129">
    <property type="interactions" value="39"/>
</dbReference>
<dbReference type="ComplexPortal" id="CPX-3446">
    <property type="entry name" value="TrpAB tryptophan synthase complex"/>
</dbReference>
<dbReference type="DIP" id="DIP-35957N"/>
<dbReference type="FunCoup" id="P0A877">
    <property type="interactions" value="727"/>
</dbReference>
<dbReference type="IntAct" id="P0A877">
    <property type="interactions" value="6"/>
</dbReference>
<dbReference type="STRING" id="511145.b1260"/>
<dbReference type="BindingDB" id="P0A877"/>
<dbReference type="ChEMBL" id="CHEMBL3885646"/>
<dbReference type="jPOST" id="P0A877"/>
<dbReference type="PaxDb" id="511145-b1260"/>
<dbReference type="EnsemblBacteria" id="AAC74342">
    <property type="protein sequence ID" value="AAC74342"/>
    <property type="gene ID" value="b1260"/>
</dbReference>
<dbReference type="GeneID" id="75171374"/>
<dbReference type="GeneID" id="946204"/>
<dbReference type="KEGG" id="ecj:JW1252"/>
<dbReference type="KEGG" id="eco:b1260"/>
<dbReference type="KEGG" id="ecoc:C3026_07395"/>
<dbReference type="PATRIC" id="fig|1411691.4.peg.1023"/>
<dbReference type="EchoBASE" id="EB1017"/>
<dbReference type="eggNOG" id="COG0159">
    <property type="taxonomic scope" value="Bacteria"/>
</dbReference>
<dbReference type="HOGENOM" id="CLU_016734_0_4_6"/>
<dbReference type="InParanoid" id="P0A877"/>
<dbReference type="OMA" id="LVMTYWN"/>
<dbReference type="OrthoDB" id="9804578at2"/>
<dbReference type="PhylomeDB" id="P0A877"/>
<dbReference type="BioCyc" id="EcoCyc:TRYPSYN-APROTEIN"/>
<dbReference type="BioCyc" id="MetaCyc:TRYPSYN-APROTEIN"/>
<dbReference type="BRENDA" id="4.2.1.20">
    <property type="organism ID" value="2026"/>
</dbReference>
<dbReference type="SABIO-RK" id="P0A877"/>
<dbReference type="UniPathway" id="UPA00035">
    <property type="reaction ID" value="UER00044"/>
</dbReference>
<dbReference type="EvolutionaryTrace" id="P0A877"/>
<dbReference type="PRO" id="PR:P0A877"/>
<dbReference type="Proteomes" id="UP000000625">
    <property type="component" value="Chromosome"/>
</dbReference>
<dbReference type="GO" id="GO:0005737">
    <property type="term" value="C:cytoplasm"/>
    <property type="evidence" value="ECO:0000314"/>
    <property type="project" value="EcoliWiki"/>
</dbReference>
<dbReference type="GO" id="GO:0005829">
    <property type="term" value="C:cytosol"/>
    <property type="evidence" value="ECO:0000314"/>
    <property type="project" value="EcoCyc"/>
</dbReference>
<dbReference type="GO" id="GO:0016829">
    <property type="term" value="F:lyase activity"/>
    <property type="evidence" value="ECO:0000314"/>
    <property type="project" value="EcoCyc"/>
</dbReference>
<dbReference type="GO" id="GO:0060090">
    <property type="term" value="F:molecular adaptor activity"/>
    <property type="evidence" value="ECO:0000269"/>
    <property type="project" value="DisProt"/>
</dbReference>
<dbReference type="GO" id="GO:0004834">
    <property type="term" value="F:tryptophan synthase activity"/>
    <property type="evidence" value="ECO:0007669"/>
    <property type="project" value="UniProtKB-UniRule"/>
</dbReference>
<dbReference type="GO" id="GO:0009073">
    <property type="term" value="P:aromatic amino acid family biosynthetic process"/>
    <property type="evidence" value="ECO:0000315"/>
    <property type="project" value="EcoliWiki"/>
</dbReference>
<dbReference type="GO" id="GO:0000162">
    <property type="term" value="P:L-tryptophan biosynthetic process"/>
    <property type="evidence" value="ECO:0000314"/>
    <property type="project" value="ComplexPortal"/>
</dbReference>
<dbReference type="CDD" id="cd04724">
    <property type="entry name" value="Tryptophan_synthase_alpha"/>
    <property type="match status" value="1"/>
</dbReference>
<dbReference type="DisProt" id="DP00252"/>
<dbReference type="FunFam" id="3.20.20.70:FF:000037">
    <property type="entry name" value="Tryptophan synthase alpha chain"/>
    <property type="match status" value="1"/>
</dbReference>
<dbReference type="Gene3D" id="3.20.20.70">
    <property type="entry name" value="Aldolase class I"/>
    <property type="match status" value="1"/>
</dbReference>
<dbReference type="HAMAP" id="MF_00131">
    <property type="entry name" value="Trp_synth_alpha"/>
    <property type="match status" value="1"/>
</dbReference>
<dbReference type="InterPro" id="IPR013785">
    <property type="entry name" value="Aldolase_TIM"/>
</dbReference>
<dbReference type="InterPro" id="IPR011060">
    <property type="entry name" value="RibuloseP-bd_barrel"/>
</dbReference>
<dbReference type="InterPro" id="IPR018204">
    <property type="entry name" value="Trp_synthase_alpha_AS"/>
</dbReference>
<dbReference type="InterPro" id="IPR002028">
    <property type="entry name" value="Trp_synthase_suA"/>
</dbReference>
<dbReference type="NCBIfam" id="TIGR00262">
    <property type="entry name" value="trpA"/>
    <property type="match status" value="1"/>
</dbReference>
<dbReference type="PANTHER" id="PTHR43406:SF1">
    <property type="entry name" value="TRYPTOPHAN SYNTHASE ALPHA CHAIN, CHLOROPLASTIC"/>
    <property type="match status" value="1"/>
</dbReference>
<dbReference type="PANTHER" id="PTHR43406">
    <property type="entry name" value="TRYPTOPHAN SYNTHASE, ALPHA CHAIN"/>
    <property type="match status" value="1"/>
</dbReference>
<dbReference type="Pfam" id="PF00290">
    <property type="entry name" value="Trp_syntA"/>
    <property type="match status" value="1"/>
</dbReference>
<dbReference type="SUPFAM" id="SSF51366">
    <property type="entry name" value="Ribulose-phoshate binding barrel"/>
    <property type="match status" value="1"/>
</dbReference>
<dbReference type="PROSITE" id="PS00167">
    <property type="entry name" value="TRP_SYNTHASE_ALPHA"/>
    <property type="match status" value="1"/>
</dbReference>
<accession>P0A877</accession>
<accession>P00928</accession>
<accession>Q47669</accession>
<evidence type="ECO:0000255" key="1">
    <source>
        <dbReference type="HAMAP-Rule" id="MF_00131"/>
    </source>
</evidence>
<evidence type="ECO:0007829" key="2">
    <source>
        <dbReference type="PDB" id="1V7Y"/>
    </source>
</evidence>
<evidence type="ECO:0007829" key="3">
    <source>
        <dbReference type="PDB" id="1WQ5"/>
    </source>
</evidence>
<evidence type="ECO:0007829" key="4">
    <source>
        <dbReference type="PDB" id="1XCF"/>
    </source>
</evidence>
<feature type="chain" id="PRO_0000098778" description="Tryptophan synthase alpha chain">
    <location>
        <begin position="1"/>
        <end position="268"/>
    </location>
</feature>
<feature type="active site" description="Proton acceptor" evidence="1">
    <location>
        <position position="49"/>
    </location>
</feature>
<feature type="active site" description="Proton acceptor" evidence="1">
    <location>
        <position position="60"/>
    </location>
</feature>
<feature type="sequence variant" description="In mutant TrpA46-Asp-PR3.">
    <original>LQGFGISAPDQVKAAI</original>
    <variation>IAGFWYFRPGSGKSSD</variation>
    <location>
        <begin position="209"/>
        <end position="224"/>
    </location>
</feature>
<feature type="helix" evidence="4">
    <location>
        <begin position="3"/>
        <end position="12"/>
    </location>
</feature>
<feature type="turn" evidence="4">
    <location>
        <begin position="13"/>
        <end position="15"/>
    </location>
</feature>
<feature type="strand" evidence="4">
    <location>
        <begin position="18"/>
        <end position="24"/>
    </location>
</feature>
<feature type="strand" evidence="4">
    <location>
        <begin position="26"/>
        <end position="28"/>
    </location>
</feature>
<feature type="helix" evidence="4">
    <location>
        <begin position="30"/>
        <end position="43"/>
    </location>
</feature>
<feature type="strand" evidence="4">
    <location>
        <begin position="46"/>
        <end position="51"/>
    </location>
</feature>
<feature type="helix" evidence="3">
    <location>
        <begin position="70"/>
        <end position="73"/>
    </location>
</feature>
<feature type="helix" evidence="4">
    <location>
        <begin position="78"/>
        <end position="91"/>
    </location>
</feature>
<feature type="strand" evidence="4">
    <location>
        <begin position="93"/>
        <end position="95"/>
    </location>
</feature>
<feature type="strand" evidence="4">
    <location>
        <begin position="97"/>
        <end position="101"/>
    </location>
</feature>
<feature type="helix" evidence="4">
    <location>
        <begin position="103"/>
        <end position="109"/>
    </location>
</feature>
<feature type="helix" evidence="4">
    <location>
        <begin position="111"/>
        <end position="121"/>
    </location>
</feature>
<feature type="strand" evidence="4">
    <location>
        <begin position="125"/>
        <end position="128"/>
    </location>
</feature>
<feature type="helix" evidence="4">
    <location>
        <begin position="133"/>
        <end position="135"/>
    </location>
</feature>
<feature type="helix" evidence="4">
    <location>
        <begin position="137"/>
        <end position="145"/>
    </location>
</feature>
<feature type="strand" evidence="2">
    <location>
        <begin position="149"/>
        <end position="151"/>
    </location>
</feature>
<feature type="helix" evidence="4">
    <location>
        <begin position="160"/>
        <end position="169"/>
    </location>
</feature>
<feature type="strand" evidence="4">
    <location>
        <begin position="174"/>
        <end position="176"/>
    </location>
</feature>
<feature type="helix" evidence="3">
    <location>
        <begin position="179"/>
        <end position="181"/>
    </location>
</feature>
<feature type="helix" evidence="4">
    <location>
        <begin position="193"/>
        <end position="202"/>
    </location>
</feature>
<feature type="strand" evidence="4">
    <location>
        <begin position="208"/>
        <end position="211"/>
    </location>
</feature>
<feature type="helix" evidence="4">
    <location>
        <begin position="217"/>
        <end position="225"/>
    </location>
</feature>
<feature type="strand" evidence="4">
    <location>
        <begin position="229"/>
        <end position="233"/>
    </location>
</feature>
<feature type="helix" evidence="4">
    <location>
        <begin position="236"/>
        <end position="242"/>
    </location>
</feature>
<feature type="turn" evidence="3">
    <location>
        <begin position="244"/>
        <end position="246"/>
    </location>
</feature>
<feature type="helix" evidence="4">
    <location>
        <begin position="248"/>
        <end position="264"/>
    </location>
</feature>
<sequence>MERYESLFAQLKERKEGAFVPFVTLGDPGIEQSLKIIDTLIEAGADALELGIPFSDPLADGPTIQNATLRAFAAGVTPAQCFEMLALIRQKHPTIPIGLLMYANLVFNKGIDEFYAQCEKVGVDSVLVADVPVEESAPFRQAALRHNVAPIFICPPNADDDLLRQIASYGRGYTYLLSRAGVTGAENRAALPLNHLVAKLKEYNAAPPLQGFGISAPDQVKAAIDAGAAGAISGSAIVKIIEQHINEPEKMLAALKVFVQPMKAATRS</sequence>